<gene>
    <name type="primary">CYP76B10</name>
    <name type="synonym">G10H</name>
</gene>
<keyword id="KW-0256">Endoplasmic reticulum</keyword>
<keyword id="KW-0349">Heme</keyword>
<keyword id="KW-0408">Iron</keyword>
<keyword id="KW-0472">Membrane</keyword>
<keyword id="KW-0479">Metal-binding</keyword>
<keyword id="KW-0503">Monooxygenase</keyword>
<keyword id="KW-0521">NADP</keyword>
<keyword id="KW-0560">Oxidoreductase</keyword>
<keyword id="KW-0812">Transmembrane</keyword>
<keyword id="KW-1133">Transmembrane helix</keyword>
<protein>
    <recommendedName>
        <fullName>Geraniol 8-hydroxylase</fullName>
        <ecNumber evidence="3">1.14.14.83</ecNumber>
    </recommendedName>
    <alternativeName>
        <fullName>Cytochrome P450 76B10</fullName>
    </alternativeName>
    <alternativeName>
        <fullName>Geraniol 10-hydroxylase</fullName>
        <shortName>SmG10H</shortName>
    </alternativeName>
</protein>
<reference key="1">
    <citation type="journal article" date="2010" name="Biosci. Biotechnol. Biochem.">
        <title>Cloning and functional analysis of geraniol 10-hydroxylase, a cytochrome P450 from Swertia mussotii Franch.</title>
        <authorList>
            <person name="Wang J."/>
            <person name="Liu Y."/>
            <person name="Cai Y."/>
            <person name="Zhang F."/>
            <person name="Xia G."/>
            <person name="Xiang F."/>
        </authorList>
    </citation>
    <scope>NUCLEOTIDE SEQUENCE [MRNA]</scope>
    <scope>FUNCTION</scope>
    <scope>CATALYTIC ACTIVITY</scope>
    <scope>TISSUE SPECIFICITY</scope>
    <scope>INDUCTION</scope>
</reference>
<feature type="chain" id="PRO_0000418920" description="Geraniol 8-hydroxylase">
    <location>
        <begin position="1"/>
        <end position="495"/>
    </location>
</feature>
<feature type="transmembrane region" description="Helical" evidence="2">
    <location>
        <begin position="5"/>
        <end position="25"/>
    </location>
</feature>
<feature type="binding site" description="axial binding residue" evidence="1">
    <location>
        <position position="438"/>
    </location>
    <ligand>
        <name>heme</name>
        <dbReference type="ChEBI" id="CHEBI:30413"/>
    </ligand>
    <ligandPart>
        <name>Fe</name>
        <dbReference type="ChEBI" id="CHEBI:18248"/>
    </ligandPart>
</feature>
<dbReference type="EC" id="1.14.14.83" evidence="3"/>
<dbReference type="EMBL" id="GU168041">
    <property type="protein sequence ID" value="ACZ48680.1"/>
    <property type="molecule type" value="mRNA"/>
</dbReference>
<dbReference type="SMR" id="D1MI46"/>
<dbReference type="KEGG" id="ag:ACZ48680"/>
<dbReference type="BRENDA" id="1.14.14.83">
    <property type="organism ID" value="12614"/>
</dbReference>
<dbReference type="GO" id="GO:0005789">
    <property type="term" value="C:endoplasmic reticulum membrane"/>
    <property type="evidence" value="ECO:0007669"/>
    <property type="project" value="UniProtKB-SubCell"/>
</dbReference>
<dbReference type="GO" id="GO:0102811">
    <property type="term" value="F:geraniol 10-hydroxylase activity"/>
    <property type="evidence" value="ECO:0007669"/>
    <property type="project" value="UniProtKB-EC"/>
</dbReference>
<dbReference type="GO" id="GO:0020037">
    <property type="term" value="F:heme binding"/>
    <property type="evidence" value="ECO:0007669"/>
    <property type="project" value="InterPro"/>
</dbReference>
<dbReference type="GO" id="GO:0005506">
    <property type="term" value="F:iron ion binding"/>
    <property type="evidence" value="ECO:0007669"/>
    <property type="project" value="InterPro"/>
</dbReference>
<dbReference type="GO" id="GO:0016709">
    <property type="term" value="F:oxidoreductase activity, acting on paired donors, with incorporation or reduction of molecular oxygen, NAD(P)H as one donor, and incorporation of one atom of oxygen"/>
    <property type="evidence" value="ECO:0000314"/>
    <property type="project" value="UniProtKB"/>
</dbReference>
<dbReference type="GO" id="GO:0016099">
    <property type="term" value="P:monoterpenoid biosynthetic process"/>
    <property type="evidence" value="ECO:0000314"/>
    <property type="project" value="UniProtKB"/>
</dbReference>
<dbReference type="CDD" id="cd11073">
    <property type="entry name" value="CYP76-like"/>
    <property type="match status" value="1"/>
</dbReference>
<dbReference type="FunFam" id="1.10.630.10:FF:000007">
    <property type="entry name" value="Cytochrome P450 76C4"/>
    <property type="match status" value="1"/>
</dbReference>
<dbReference type="Gene3D" id="1.10.630.10">
    <property type="entry name" value="Cytochrome P450"/>
    <property type="match status" value="1"/>
</dbReference>
<dbReference type="InterPro" id="IPR001128">
    <property type="entry name" value="Cyt_P450"/>
</dbReference>
<dbReference type="InterPro" id="IPR017972">
    <property type="entry name" value="Cyt_P450_CS"/>
</dbReference>
<dbReference type="InterPro" id="IPR002401">
    <property type="entry name" value="Cyt_P450_E_grp-I"/>
</dbReference>
<dbReference type="InterPro" id="IPR036396">
    <property type="entry name" value="Cyt_P450_sf"/>
</dbReference>
<dbReference type="PANTHER" id="PTHR47950">
    <property type="entry name" value="CYTOCHROME P450, FAMILY 76, SUBFAMILY C, POLYPEPTIDE 5-RELATED"/>
    <property type="match status" value="1"/>
</dbReference>
<dbReference type="PANTHER" id="PTHR47950:SF4">
    <property type="entry name" value="GERANIOL 8-HYDROXYLASE-LIKE"/>
    <property type="match status" value="1"/>
</dbReference>
<dbReference type="Pfam" id="PF00067">
    <property type="entry name" value="p450"/>
    <property type="match status" value="1"/>
</dbReference>
<dbReference type="PRINTS" id="PR00463">
    <property type="entry name" value="EP450I"/>
</dbReference>
<dbReference type="PRINTS" id="PR00385">
    <property type="entry name" value="P450"/>
</dbReference>
<dbReference type="SUPFAM" id="SSF48264">
    <property type="entry name" value="Cytochrome P450"/>
    <property type="match status" value="1"/>
</dbReference>
<dbReference type="PROSITE" id="PS00086">
    <property type="entry name" value="CYTOCHROME_P450"/>
    <property type="match status" value="1"/>
</dbReference>
<proteinExistence type="evidence at protein level"/>
<sequence>MDFDFLTIAIGFLFTITLYQALNFFSRKSKNLPPGPSPLPLIGNLHLLGDQPHKSLAKLAKKHGPIMGLQLGQVTTIVVTSSGMAKEVLQKQDLAFSSRSIPNAIHAHDQYKYSVIWLPVASRWRGLRKALNSNMFSGNRLDANQHLRSRKVQELIAYCRKSSQTGDAIDVGRAAFRTSLNLLSNTMFSKDLTDPYSDSAKEFKDLVWNVMVEAGKPNLVDYFPLLDKVDPQGIRKRMTIHFGKILELFGGLIDERLQQKKAKGVNDDVLDVLLTTSEESPEEIDRTHIQRMCLDLFVAGTDTTSSTLEWAMSEMLKNPEKMKAAQAELAQVIGKGKAVEEADLARLPYLRCAIKETLRIHPPVPLLIPRRTEQEVEVCGYTVPKNSQVLVNVWAISRDDAIWKDPLSFKPERFLESELEMRGKDFELIPFGAGRRICPGLPLAVRMVPVMLGSLLNSFDWKLEGGIAPKDLDMEEKFGITLQKAHPLRAVATPL</sequence>
<name>C76BA_SWEMU</name>
<organism>
    <name type="scientific">Swertia mussotii</name>
    <name type="common">Felwort</name>
    <dbReference type="NCBI Taxonomy" id="137888"/>
    <lineage>
        <taxon>Eukaryota</taxon>
        <taxon>Viridiplantae</taxon>
        <taxon>Streptophyta</taxon>
        <taxon>Embryophyta</taxon>
        <taxon>Tracheophyta</taxon>
        <taxon>Spermatophyta</taxon>
        <taxon>Magnoliopsida</taxon>
        <taxon>eudicotyledons</taxon>
        <taxon>Gunneridae</taxon>
        <taxon>Pentapetalae</taxon>
        <taxon>asterids</taxon>
        <taxon>lamiids</taxon>
        <taxon>Gentianales</taxon>
        <taxon>Gentianaceae</taxon>
        <taxon>Gentianeae</taxon>
        <taxon>Swertiinae</taxon>
        <taxon>Swertia</taxon>
    </lineage>
</organism>
<evidence type="ECO:0000250" key="1"/>
<evidence type="ECO:0000255" key="2"/>
<evidence type="ECO:0000269" key="3">
    <source>
    </source>
</evidence>
<evidence type="ECO:0000305" key="4"/>
<comment type="function">
    <text evidence="3">Hydroxylase involved in the biosynthesis of hydroxygeraniol, a precursor of the iridoid monoterpenoid swertiamarin.</text>
</comment>
<comment type="catalytic activity">
    <reaction evidence="3">
        <text>(2E)-geraniol + reduced [NADPH--hemoprotein reductase] + O2 = (6E)-8-hydroxygeraniol + oxidized [NADPH--hemoprotein reductase] + H2O + H(+)</text>
        <dbReference type="Rhea" id="RHEA:32495"/>
        <dbReference type="Rhea" id="RHEA-COMP:11964"/>
        <dbReference type="Rhea" id="RHEA-COMP:11965"/>
        <dbReference type="ChEBI" id="CHEBI:15377"/>
        <dbReference type="ChEBI" id="CHEBI:15378"/>
        <dbReference type="ChEBI" id="CHEBI:15379"/>
        <dbReference type="ChEBI" id="CHEBI:17447"/>
        <dbReference type="ChEBI" id="CHEBI:57618"/>
        <dbReference type="ChEBI" id="CHEBI:58210"/>
        <dbReference type="ChEBI" id="CHEBI:64235"/>
        <dbReference type="EC" id="1.14.14.83"/>
    </reaction>
</comment>
<comment type="cofactor">
    <cofactor evidence="1">
        <name>heme</name>
        <dbReference type="ChEBI" id="CHEBI:30413"/>
    </cofactor>
</comment>
<comment type="subcellular location">
    <subcellularLocation>
        <location evidence="4">Endoplasmic reticulum membrane</location>
        <topology evidence="4">Single-pass membrane protein</topology>
    </subcellularLocation>
</comment>
<comment type="tissue specificity">
    <text evidence="3">Expressed in leaves, stems and roots.</text>
</comment>
<comment type="induction">
    <text evidence="3">Up-regulated by methyl jasmonate treatment.</text>
</comment>
<comment type="miscellaneous">
    <text>The recommended numbering of geraniol gives (6E)-8-hydroxygeraniol as the product rather than 10-hydroxygeraniol as used in most publications.</text>
</comment>
<comment type="similarity">
    <text evidence="4">Belongs to the cytochrome P450 family.</text>
</comment>
<accession>D1MI46</accession>